<feature type="chain" id="PRO_0000295594" description="Solute carrier family 41 member 3">
    <location>
        <begin position="1"/>
        <end position="462"/>
    </location>
</feature>
<feature type="transmembrane region" description="Helical" evidence="2">
    <location>
        <begin position="41"/>
        <end position="61"/>
    </location>
</feature>
<feature type="transmembrane region" description="Helical" evidence="2">
    <location>
        <begin position="121"/>
        <end position="141"/>
    </location>
</feature>
<feature type="transmembrane region" description="Helical" evidence="2">
    <location>
        <begin position="163"/>
        <end position="183"/>
    </location>
</feature>
<feature type="transmembrane region" description="Helical" evidence="2">
    <location>
        <begin position="194"/>
        <end position="214"/>
    </location>
</feature>
<feature type="transmembrane region" description="Helical" evidence="2">
    <location>
        <begin position="225"/>
        <end position="245"/>
    </location>
</feature>
<feature type="transmembrane region" description="Helical" evidence="2">
    <location>
        <begin position="258"/>
        <end position="278"/>
    </location>
</feature>
<feature type="transmembrane region" description="Helical" evidence="2">
    <location>
        <begin position="351"/>
        <end position="371"/>
    </location>
</feature>
<feature type="transmembrane region" description="Helical" evidence="2">
    <location>
        <begin position="380"/>
        <end position="400"/>
    </location>
</feature>
<feature type="transmembrane region" description="Helical" evidence="2">
    <location>
        <begin position="424"/>
        <end position="444"/>
    </location>
</feature>
<reference key="1">
    <citation type="journal article" date="2004" name="Genome Res.">
        <title>The status, quality, and expansion of the NIH full-length cDNA project: the Mammalian Gene Collection (MGC).</title>
        <authorList>
            <consortium name="The MGC Project Team"/>
        </authorList>
    </citation>
    <scope>NUCLEOTIDE SEQUENCE [LARGE SCALE MRNA]</scope>
    <source>
        <tissue>Testis</tissue>
    </source>
</reference>
<dbReference type="EMBL" id="BC104698">
    <property type="protein sequence ID" value="AAI04699.1"/>
    <property type="molecule type" value="mRNA"/>
</dbReference>
<dbReference type="RefSeq" id="NP_001032569.1">
    <property type="nucleotide sequence ID" value="NM_001037492.1"/>
</dbReference>
<dbReference type="RefSeq" id="XP_006236937.1">
    <property type="nucleotide sequence ID" value="XM_006236875.3"/>
</dbReference>
<dbReference type="FunCoup" id="Q3SWT5">
    <property type="interactions" value="344"/>
</dbReference>
<dbReference type="STRING" id="10116.ENSRNOP00000071826"/>
<dbReference type="iPTMnet" id="Q3SWT5"/>
<dbReference type="PhosphoSitePlus" id="Q3SWT5"/>
<dbReference type="SwissPalm" id="Q3SWT5"/>
<dbReference type="PaxDb" id="10116-ENSRNOP00000065688"/>
<dbReference type="Ensembl" id="ENSRNOT00000073268.2">
    <property type="protein sequence ID" value="ENSRNOP00000065688.1"/>
    <property type="gene ID" value="ENSRNOG00000045821.3"/>
</dbReference>
<dbReference type="GeneID" id="641603"/>
<dbReference type="KEGG" id="rno:641603"/>
<dbReference type="AGR" id="RGD:1589573"/>
<dbReference type="CTD" id="54946"/>
<dbReference type="RGD" id="1589573">
    <property type="gene designation" value="Slc41a3"/>
</dbReference>
<dbReference type="eggNOG" id="KOG3788">
    <property type="taxonomic scope" value="Eukaryota"/>
</dbReference>
<dbReference type="GeneTree" id="ENSGT00950000183042"/>
<dbReference type="HOGENOM" id="CLU_018207_2_0_1"/>
<dbReference type="InParanoid" id="Q3SWT5"/>
<dbReference type="OMA" id="NLEFCFQ"/>
<dbReference type="PhylomeDB" id="Q3SWT5"/>
<dbReference type="PRO" id="PR:Q3SWT5"/>
<dbReference type="Proteomes" id="UP000002494">
    <property type="component" value="Chromosome 4"/>
</dbReference>
<dbReference type="Bgee" id="ENSRNOG00000045821">
    <property type="expression patterns" value="Expressed in skeletal muscle tissue and 18 other cell types or tissues"/>
</dbReference>
<dbReference type="ExpressionAtlas" id="Q3SWT5">
    <property type="expression patterns" value="baseline and differential"/>
</dbReference>
<dbReference type="GO" id="GO:0005743">
    <property type="term" value="C:mitochondrial inner membrane"/>
    <property type="evidence" value="ECO:0000250"/>
    <property type="project" value="UniProtKB"/>
</dbReference>
<dbReference type="GO" id="GO:0005886">
    <property type="term" value="C:plasma membrane"/>
    <property type="evidence" value="ECO:0000318"/>
    <property type="project" value="GO_Central"/>
</dbReference>
<dbReference type="GO" id="GO:0061768">
    <property type="term" value="F:magnesium:sodium antiporter activity"/>
    <property type="evidence" value="ECO:0000250"/>
    <property type="project" value="UniProtKB"/>
</dbReference>
<dbReference type="GO" id="GO:0045016">
    <property type="term" value="P:mitochondrial magnesium ion transmembrane transport"/>
    <property type="evidence" value="ECO:0000250"/>
    <property type="project" value="UniProtKB"/>
</dbReference>
<dbReference type="FunFam" id="1.10.357.20:FF:000001">
    <property type="entry name" value="Solute carrier family 41 member 2"/>
    <property type="match status" value="1"/>
</dbReference>
<dbReference type="FunFam" id="1.10.357.20:FF:000002">
    <property type="entry name" value="Solute carrier family 41, member 2"/>
    <property type="match status" value="1"/>
</dbReference>
<dbReference type="Gene3D" id="1.10.357.20">
    <property type="entry name" value="SLC41 divalent cation transporters, integral membrane domain"/>
    <property type="match status" value="2"/>
</dbReference>
<dbReference type="InterPro" id="IPR006667">
    <property type="entry name" value="SLC41_membr_dom"/>
</dbReference>
<dbReference type="InterPro" id="IPR036739">
    <property type="entry name" value="SLC41_membr_dom_sf"/>
</dbReference>
<dbReference type="InterPro" id="IPR045349">
    <property type="entry name" value="SLC41A1-3"/>
</dbReference>
<dbReference type="PANTHER" id="PTHR16228">
    <property type="entry name" value="DIVALENT CATION TRANSPORTER SOLUTE CARRIER FAMILY 41"/>
    <property type="match status" value="1"/>
</dbReference>
<dbReference type="PANTHER" id="PTHR16228:SF22">
    <property type="entry name" value="SOLUTE CARRIER FAMILY 41 MEMBER 3"/>
    <property type="match status" value="1"/>
</dbReference>
<dbReference type="Pfam" id="PF01769">
    <property type="entry name" value="MgtE"/>
    <property type="match status" value="2"/>
</dbReference>
<dbReference type="SUPFAM" id="SSF161093">
    <property type="entry name" value="MgtE membrane domain-like"/>
    <property type="match status" value="2"/>
</dbReference>
<accession>Q3SWT5</accession>
<protein>
    <recommendedName>
        <fullName>Solute carrier family 41 member 3</fullName>
    </recommendedName>
</protein>
<name>S41A3_RAT</name>
<organism>
    <name type="scientific">Rattus norvegicus</name>
    <name type="common">Rat</name>
    <dbReference type="NCBI Taxonomy" id="10116"/>
    <lineage>
        <taxon>Eukaryota</taxon>
        <taxon>Metazoa</taxon>
        <taxon>Chordata</taxon>
        <taxon>Craniata</taxon>
        <taxon>Vertebrata</taxon>
        <taxon>Euteleostomi</taxon>
        <taxon>Mammalia</taxon>
        <taxon>Eutheria</taxon>
        <taxon>Euarchontoglires</taxon>
        <taxon>Glires</taxon>
        <taxon>Rodentia</taxon>
        <taxon>Myomorpha</taxon>
        <taxon>Muroidea</taxon>
        <taxon>Muridae</taxon>
        <taxon>Murinae</taxon>
        <taxon>Rattus</taxon>
    </lineage>
</organism>
<comment type="function">
    <text evidence="1">Na(+)/Mg(2+) ion exchanger that acts as a predominant Mg(2+) efflux system at the mitochondrial inner membrane.</text>
</comment>
<comment type="catalytic activity">
    <reaction evidence="1">
        <text>Mg(2+)(in) + 2 Na(+)(out) = Mg(2+)(out) + 2 Na(+)(in)</text>
        <dbReference type="Rhea" id="RHEA:66616"/>
        <dbReference type="ChEBI" id="CHEBI:18420"/>
        <dbReference type="ChEBI" id="CHEBI:29101"/>
    </reaction>
    <physiologicalReaction direction="left-to-right" evidence="1">
        <dbReference type="Rhea" id="RHEA:66617"/>
    </physiologicalReaction>
</comment>
<comment type="subcellular location">
    <subcellularLocation>
        <location evidence="1">Mitochondrion inner membrane</location>
        <topology evidence="2">Multi-pass membrane protein</topology>
    </subcellularLocation>
</comment>
<comment type="similarity">
    <text evidence="3">Belongs to the SLC41A transporter family.</text>
</comment>
<proteinExistence type="evidence at transcript level"/>
<gene>
    <name type="primary">Slc41a3</name>
</gene>
<keyword id="KW-0406">Ion transport</keyword>
<keyword id="KW-0460">Magnesium</keyword>
<keyword id="KW-0472">Membrane</keyword>
<keyword id="KW-0496">Mitochondrion</keyword>
<keyword id="KW-0999">Mitochondrion inner membrane</keyword>
<keyword id="KW-1185">Reference proteome</keyword>
<keyword id="KW-0812">Transmembrane</keyword>
<keyword id="KW-1133">Transmembrane helix</keyword>
<keyword id="KW-0813">Transport</keyword>
<sequence length="462" mass="50526">MVVTQLSLEFRFQGKKLRGFSCELTRSPHGVLPESVLSTTCQVAIPILLSGLGMMTAGLVMNTVQHWPVFRDVKDLLTLVPPLVGLKGNLEMTLASRLSTSANTGQIDDRQERYRIISSNLAVVQVQATVVGLLAAVASLMLGTVSHEEFDWAKVALLCTSSVITAFLAALALGILMICIVIGARKFGVNPDNIATPIAASLGDLITLSILALMSSFFYSHRDTWYLTPLVCIGFLALTPLWIFIAKQNPPIMKILKYGWFPIILAMIISSFGGLILSKTISKHQFKGMAVLTPVICGVGGNLVAIQTSRISTFLHMWSTPGVLPVQMKRFWPNPCFTFCSSEINSVSARVLLFLVVPGHLIFFYLICLVEGQSVTSSKIFVLLYLMAGMMQVVILLYLAEVMVRLTWHQALDPDNHCIPYLTGLGDLLGTSLLALCFLLDWLLRGRANLAELVSELVSVPP</sequence>
<evidence type="ECO:0000250" key="1">
    <source>
        <dbReference type="UniProtKB" id="Q96GZ6"/>
    </source>
</evidence>
<evidence type="ECO:0000255" key="2"/>
<evidence type="ECO:0000305" key="3"/>